<evidence type="ECO:0000256" key="1">
    <source>
        <dbReference type="SAM" id="MobiDB-lite"/>
    </source>
</evidence>
<evidence type="ECO:0000303" key="2">
    <source>
    </source>
</evidence>
<evidence type="ECO:0000305" key="3"/>
<feature type="chain" id="PRO_0000064709" description="Abscisic stress-ripening protein 3">
    <location>
        <begin position="1"/>
        <end position="108"/>
    </location>
</feature>
<feature type="region of interest" description="Disordered" evidence="1">
    <location>
        <begin position="1"/>
        <end position="34"/>
    </location>
</feature>
<feature type="region of interest" description="Disordered" evidence="1">
    <location>
        <begin position="84"/>
        <end position="108"/>
    </location>
</feature>
<feature type="compositionally biased region" description="Basic and acidic residues" evidence="1">
    <location>
        <begin position="15"/>
        <end position="24"/>
    </location>
</feature>
<feature type="compositionally biased region" description="Basic residues" evidence="1">
    <location>
        <begin position="25"/>
        <end position="34"/>
    </location>
</feature>
<feature type="compositionally biased region" description="Basic and acidic residues" evidence="1">
    <location>
        <begin position="95"/>
        <end position="108"/>
    </location>
</feature>
<sequence>MAEEKQHHRLFHHKNREEEGGPVDHKKKVKHHSHLQKIGELGAVAAGAYALHEKHKAKKDPENAHKHKIKQEIAAVAAVGAGGFAFHEHHQKKEAKKEKKAAEKGRHH</sequence>
<accession>P37220</accession>
<accession>Q2QJU7</accession>
<proteinExistence type="inferred from homology"/>
<gene>
    <name evidence="2" type="primary">ASR3</name>
</gene>
<name>ASR3_SOLLC</name>
<organism>
    <name type="scientific">Solanum lycopersicum</name>
    <name type="common">Tomato</name>
    <name type="synonym">Lycopersicon esculentum</name>
    <dbReference type="NCBI Taxonomy" id="4081"/>
    <lineage>
        <taxon>Eukaryota</taxon>
        <taxon>Viridiplantae</taxon>
        <taxon>Streptophyta</taxon>
        <taxon>Embryophyta</taxon>
        <taxon>Tracheophyta</taxon>
        <taxon>Spermatophyta</taxon>
        <taxon>Magnoliopsida</taxon>
        <taxon>eudicotyledons</taxon>
        <taxon>Gunneridae</taxon>
        <taxon>Pentapetalae</taxon>
        <taxon>asterids</taxon>
        <taxon>lamiids</taxon>
        <taxon>Solanales</taxon>
        <taxon>Solanaceae</taxon>
        <taxon>Solanoideae</taxon>
        <taxon>Solaneae</taxon>
        <taxon>Solanum</taxon>
        <taxon>Solanum subgen. Lycopersicon</taxon>
    </lineage>
</organism>
<protein>
    <recommendedName>
        <fullName evidence="2">Abscisic stress-ripening protein 3</fullName>
    </recommendedName>
</protein>
<reference key="1">
    <citation type="journal article" date="1997" name="Acta Hortic.">
        <title>Asr1, a tomato water-stress regulated gene: genomic organization, developmental regulation and DNA-binding activity.</title>
        <authorList>
            <person name="Gilad A."/>
            <person name="Amitai-Zeigerson H."/>
            <person name="Scolnik P.A."/>
            <person name="Bar-Zvi D."/>
        </authorList>
    </citation>
    <scope>NUCLEOTIDE SEQUENCE [GENOMIC DNA]</scope>
    <source>
        <strain>cv. Ailsa Craig</strain>
    </source>
</reference>
<reference key="2">
    <citation type="journal article" date="2006" name="Gene">
        <title>Evolutionary history of the Asr gene family.</title>
        <authorList>
            <person name="Frankel N."/>
            <person name="Carrari F."/>
            <person name="Hasson E."/>
            <person name="Iusem N.D."/>
        </authorList>
    </citation>
    <scope>NUCLEOTIDE SEQUENCE [MRNA]</scope>
</reference>
<keyword id="KW-1185">Reference proteome</keyword>
<comment type="similarity">
    <text evidence="3">Belongs to the abscisic acid and water stress-induced protein family.</text>
</comment>
<comment type="sequence caution" evidence="3">
    <conflict type="erroneous gene model prediction">
        <sequence resource="EMBL-CDS" id="CAA52874"/>
    </conflict>
</comment>
<dbReference type="EMBL" id="X74908">
    <property type="protein sequence ID" value="CAA52874.1"/>
    <property type="status" value="ALT_SEQ"/>
    <property type="molecule type" value="Genomic_DNA"/>
</dbReference>
<dbReference type="EMBL" id="DQ058750">
    <property type="protein sequence ID" value="AAY98003.1"/>
    <property type="molecule type" value="mRNA"/>
</dbReference>
<dbReference type="PIR" id="S37152">
    <property type="entry name" value="S37152"/>
</dbReference>
<dbReference type="RefSeq" id="NP_001296300.1">
    <property type="nucleotide sequence ID" value="NM_001309371.1"/>
</dbReference>
<dbReference type="STRING" id="4081.P37220"/>
<dbReference type="PaxDb" id="4081-Solyc04g071590.1.1"/>
<dbReference type="GeneID" id="101247212"/>
<dbReference type="KEGG" id="sly:101247212"/>
<dbReference type="eggNOG" id="ENOG502S1T2">
    <property type="taxonomic scope" value="Eukaryota"/>
</dbReference>
<dbReference type="HOGENOM" id="CLU_094741_1_0_1"/>
<dbReference type="InParanoid" id="P37220"/>
<dbReference type="OrthoDB" id="1936600at2759"/>
<dbReference type="PhylomeDB" id="P37220"/>
<dbReference type="Proteomes" id="UP000004994">
    <property type="component" value="Unplaced"/>
</dbReference>
<dbReference type="ExpressionAtlas" id="P37220">
    <property type="expression patterns" value="baseline and differential"/>
</dbReference>
<dbReference type="InterPro" id="IPR003496">
    <property type="entry name" value="ABA_WDS"/>
</dbReference>
<dbReference type="PANTHER" id="PTHR33801:SF22">
    <property type="entry name" value="ABSCISIC STRESS-RIPENING PROTEIN 3"/>
    <property type="match status" value="1"/>
</dbReference>
<dbReference type="PANTHER" id="PTHR33801">
    <property type="entry name" value="ABSCISIC STRESS-RIPENING PROTEIN 5"/>
    <property type="match status" value="1"/>
</dbReference>
<dbReference type="Pfam" id="PF02496">
    <property type="entry name" value="ABA_WDS"/>
    <property type="match status" value="1"/>
</dbReference>